<organism>
    <name type="scientific">Gallus gallus</name>
    <name type="common">Chicken</name>
    <dbReference type="NCBI Taxonomy" id="9031"/>
    <lineage>
        <taxon>Eukaryota</taxon>
        <taxon>Metazoa</taxon>
        <taxon>Chordata</taxon>
        <taxon>Craniata</taxon>
        <taxon>Vertebrata</taxon>
        <taxon>Euteleostomi</taxon>
        <taxon>Archelosauria</taxon>
        <taxon>Archosauria</taxon>
        <taxon>Dinosauria</taxon>
        <taxon>Saurischia</taxon>
        <taxon>Theropoda</taxon>
        <taxon>Coelurosauria</taxon>
        <taxon>Aves</taxon>
        <taxon>Neognathae</taxon>
        <taxon>Galloanserae</taxon>
        <taxon>Galliformes</taxon>
        <taxon>Phasianidae</taxon>
        <taxon>Phasianinae</taxon>
        <taxon>Gallus</taxon>
    </lineage>
</organism>
<keyword id="KW-0007">Acetylation</keyword>
<keyword id="KW-0158">Chromosome</keyword>
<keyword id="KW-0903">Direct protein sequencing</keyword>
<keyword id="KW-0238">DNA-binding</keyword>
<keyword id="KW-0539">Nucleus</keyword>
<keyword id="KW-1185">Reference proteome</keyword>
<feature type="initiator methionine" description="Removed" evidence="3">
    <location>
        <position position="1"/>
    </location>
</feature>
<feature type="chain" id="PRO_0000195928" description="Histone H1.01">
    <location>
        <begin position="2"/>
        <end position="219"/>
    </location>
</feature>
<feature type="domain" description="H15" evidence="1">
    <location>
        <begin position="37"/>
        <end position="110"/>
    </location>
</feature>
<feature type="region of interest" description="Disordered" evidence="2">
    <location>
        <begin position="1"/>
        <end position="40"/>
    </location>
</feature>
<feature type="region of interest" description="Disordered" evidence="2">
    <location>
        <begin position="94"/>
        <end position="219"/>
    </location>
</feature>
<feature type="compositionally biased region" description="Low complexity" evidence="2">
    <location>
        <begin position="1"/>
        <end position="19"/>
    </location>
</feature>
<feature type="compositionally biased region" description="Low complexity" evidence="2">
    <location>
        <begin position="27"/>
        <end position="39"/>
    </location>
</feature>
<feature type="compositionally biased region" description="Basic residues" evidence="2">
    <location>
        <begin position="119"/>
        <end position="134"/>
    </location>
</feature>
<feature type="compositionally biased region" description="Basic residues" evidence="2">
    <location>
        <begin position="142"/>
        <end position="159"/>
    </location>
</feature>
<feature type="compositionally biased region" description="Basic residues" evidence="2">
    <location>
        <begin position="167"/>
        <end position="185"/>
    </location>
</feature>
<feature type="compositionally biased region" description="Basic residues" evidence="2">
    <location>
        <begin position="192"/>
        <end position="219"/>
    </location>
</feature>
<feature type="modified residue" description="N-acetylserine" evidence="3">
    <location>
        <position position="2"/>
    </location>
</feature>
<sequence length="219" mass="22044">MSETAPAAAPDAPAPGAKAAAKKPKKAAGGAKARKPAGPSVTELITKAVSASKERKGLSLAALKKALAAGGYDVEKNNSRIKLGLKSLVSKGTLVQTKGTGASGSFRLNKKPGEVKEKAPRKRATAAKPKKPAAKKPAAAAKKPKKAAAVKKSPKKAKKPAAAATKKAAKSPKKAAKAGRPKKAAKSPAKAKAVKPKAAKPKATKPKAAKAKKTAAKKK</sequence>
<comment type="function">
    <text>Histones H1 are necessary for the condensation of nucleosome chains into higher-order structures.</text>
</comment>
<comment type="subcellular location">
    <subcellularLocation>
        <location>Nucleus</location>
    </subcellularLocation>
    <subcellularLocation>
        <location>Chromosome</location>
    </subcellularLocation>
</comment>
<comment type="similarity">
    <text evidence="1">Belongs to the histone H1/H5 family.</text>
</comment>
<accession>P08284</accession>
<dbReference type="EMBL" id="X01752">
    <property type="protein sequence ID" value="CAA25889.1"/>
    <property type="molecule type" value="Genomic_DNA"/>
</dbReference>
<dbReference type="PIR" id="A23055">
    <property type="entry name" value="A23055"/>
</dbReference>
<dbReference type="RefSeq" id="NP_001035732.1">
    <property type="nucleotide sequence ID" value="NM_001040642.2"/>
</dbReference>
<dbReference type="SMR" id="P08284"/>
<dbReference type="FunCoup" id="P08284">
    <property type="interactions" value="730"/>
</dbReference>
<dbReference type="STRING" id="9031.ENSGALP00000057433"/>
<dbReference type="Ensembl" id="ENSGALT00000117263">
    <property type="protein sequence ID" value="ENSGALP00000077768"/>
    <property type="gene ID" value="ENSGALG00000060804"/>
</dbReference>
<dbReference type="Ensembl" id="ENSGALT00010029129.1">
    <property type="protein sequence ID" value="ENSGALP00010016886.1"/>
    <property type="gene ID" value="ENSGALG00010012144.1"/>
</dbReference>
<dbReference type="Ensembl" id="ENSGALT00010029131.1">
    <property type="protein sequence ID" value="ENSGALP00010016888.1"/>
    <property type="gene ID" value="ENSGALG00010012144.1"/>
</dbReference>
<dbReference type="GeneID" id="417954"/>
<dbReference type="KEGG" id="gga:417954"/>
<dbReference type="CTD" id="417954"/>
<dbReference type="VEuPathDB" id="HostDB:geneid_417954"/>
<dbReference type="GeneTree" id="ENSGT00950000183089"/>
<dbReference type="InParanoid" id="P08284"/>
<dbReference type="OMA" id="YFEMIVE"/>
<dbReference type="OrthoDB" id="9634976at2759"/>
<dbReference type="TreeFam" id="TF313664"/>
<dbReference type="PRO" id="PR:P08284"/>
<dbReference type="Proteomes" id="UP000000539">
    <property type="component" value="Chromosome 1"/>
</dbReference>
<dbReference type="GO" id="GO:0000786">
    <property type="term" value="C:nucleosome"/>
    <property type="evidence" value="ECO:0007669"/>
    <property type="project" value="InterPro"/>
</dbReference>
<dbReference type="GO" id="GO:0005634">
    <property type="term" value="C:nucleus"/>
    <property type="evidence" value="ECO:0000318"/>
    <property type="project" value="GO_Central"/>
</dbReference>
<dbReference type="GO" id="GO:0003690">
    <property type="term" value="F:double-stranded DNA binding"/>
    <property type="evidence" value="ECO:0000318"/>
    <property type="project" value="GO_Central"/>
</dbReference>
<dbReference type="GO" id="GO:0031492">
    <property type="term" value="F:nucleosomal DNA binding"/>
    <property type="evidence" value="ECO:0000318"/>
    <property type="project" value="GO_Central"/>
</dbReference>
<dbReference type="GO" id="GO:0030527">
    <property type="term" value="F:structural constituent of chromatin"/>
    <property type="evidence" value="ECO:0007669"/>
    <property type="project" value="InterPro"/>
</dbReference>
<dbReference type="GO" id="GO:0030261">
    <property type="term" value="P:chromosome condensation"/>
    <property type="evidence" value="ECO:0000318"/>
    <property type="project" value="GO_Central"/>
</dbReference>
<dbReference type="GO" id="GO:0045910">
    <property type="term" value="P:negative regulation of DNA recombination"/>
    <property type="evidence" value="ECO:0000318"/>
    <property type="project" value="GO_Central"/>
</dbReference>
<dbReference type="GO" id="GO:0006334">
    <property type="term" value="P:nucleosome assembly"/>
    <property type="evidence" value="ECO:0007669"/>
    <property type="project" value="InterPro"/>
</dbReference>
<dbReference type="CDD" id="cd00073">
    <property type="entry name" value="H15"/>
    <property type="match status" value="1"/>
</dbReference>
<dbReference type="FunFam" id="1.10.10.10:FF:000075">
    <property type="entry name" value="Histone H1 like"/>
    <property type="match status" value="1"/>
</dbReference>
<dbReference type="Gene3D" id="1.10.10.10">
    <property type="entry name" value="Winged helix-like DNA-binding domain superfamily/Winged helix DNA-binding domain"/>
    <property type="match status" value="1"/>
</dbReference>
<dbReference type="InterPro" id="IPR005819">
    <property type="entry name" value="H1/H5"/>
</dbReference>
<dbReference type="InterPro" id="IPR005818">
    <property type="entry name" value="Histone_H1/H5_H15"/>
</dbReference>
<dbReference type="InterPro" id="IPR036388">
    <property type="entry name" value="WH-like_DNA-bd_sf"/>
</dbReference>
<dbReference type="InterPro" id="IPR036390">
    <property type="entry name" value="WH_DNA-bd_sf"/>
</dbReference>
<dbReference type="Pfam" id="PF00538">
    <property type="entry name" value="Linker_histone"/>
    <property type="match status" value="1"/>
</dbReference>
<dbReference type="PRINTS" id="PR00624">
    <property type="entry name" value="HISTONEH5"/>
</dbReference>
<dbReference type="SMART" id="SM00526">
    <property type="entry name" value="H15"/>
    <property type="match status" value="1"/>
</dbReference>
<dbReference type="SUPFAM" id="SSF46785">
    <property type="entry name" value="Winged helix' DNA-binding domain"/>
    <property type="match status" value="1"/>
</dbReference>
<dbReference type="PROSITE" id="PS51504">
    <property type="entry name" value="H15"/>
    <property type="match status" value="1"/>
</dbReference>
<name>H101_CHICK</name>
<protein>
    <recommendedName>
        <fullName>Histone H1.01</fullName>
    </recommendedName>
</protein>
<proteinExistence type="evidence at protein level"/>
<reference key="1">
    <citation type="journal article" date="1985" name="Nucleic Acids Res.">
        <title>An H1 histone gene-specific 5' element and evolution of H1 and H5 genes.</title>
        <authorList>
            <person name="Coles L.S."/>
            <person name="Wells J.R.E."/>
        </authorList>
    </citation>
    <scope>NUCLEOTIDE SEQUENCE [GENOMIC DNA]</scope>
</reference>
<reference key="2">
    <citation type="submission" date="2007-01" db="UniProtKB">
        <authorList>
            <person name="Bienvenut W.V."/>
            <person name="Black E.J."/>
            <person name="Gillespie D.A."/>
        </authorList>
    </citation>
    <scope>PROTEIN SEQUENCE OF 2-18; 35-47 AND 66-76</scope>
    <scope>CLEAVAGE OF INITIATOR METHIONINE</scope>
    <scope>ACETYLATION AT SER-2</scope>
    <scope>IDENTIFICATION BY MASS SPECTROMETRY</scope>
    <source>
        <tissue>B-cell lymphoma</tissue>
    </source>
</reference>
<evidence type="ECO:0000255" key="1">
    <source>
        <dbReference type="PROSITE-ProRule" id="PRU00837"/>
    </source>
</evidence>
<evidence type="ECO:0000256" key="2">
    <source>
        <dbReference type="SAM" id="MobiDB-lite"/>
    </source>
</evidence>
<evidence type="ECO:0000269" key="3">
    <source ref="2"/>
</evidence>